<proteinExistence type="inferred from homology"/>
<name>PSTB_DESHY</name>
<accession>Q24PY8</accession>
<keyword id="KW-0067">ATP-binding</keyword>
<keyword id="KW-1003">Cell membrane</keyword>
<keyword id="KW-0472">Membrane</keyword>
<keyword id="KW-0547">Nucleotide-binding</keyword>
<keyword id="KW-0592">Phosphate transport</keyword>
<keyword id="KW-1185">Reference proteome</keyword>
<keyword id="KW-1278">Translocase</keyword>
<keyword id="KW-0813">Transport</keyword>
<dbReference type="EC" id="7.3.2.1" evidence="1"/>
<dbReference type="EMBL" id="AP008230">
    <property type="protein sequence ID" value="BAE85904.1"/>
    <property type="molecule type" value="Genomic_DNA"/>
</dbReference>
<dbReference type="RefSeq" id="WP_011461590.1">
    <property type="nucleotide sequence ID" value="NC_007907.1"/>
</dbReference>
<dbReference type="SMR" id="Q24PY8"/>
<dbReference type="STRING" id="138119.DSY4115"/>
<dbReference type="KEGG" id="dsy:DSY4115"/>
<dbReference type="eggNOG" id="COG1117">
    <property type="taxonomic scope" value="Bacteria"/>
</dbReference>
<dbReference type="HOGENOM" id="CLU_000604_1_22_9"/>
<dbReference type="Proteomes" id="UP000001946">
    <property type="component" value="Chromosome"/>
</dbReference>
<dbReference type="GO" id="GO:0005886">
    <property type="term" value="C:plasma membrane"/>
    <property type="evidence" value="ECO:0007669"/>
    <property type="project" value="UniProtKB-SubCell"/>
</dbReference>
<dbReference type="GO" id="GO:0005524">
    <property type="term" value="F:ATP binding"/>
    <property type="evidence" value="ECO:0007669"/>
    <property type="project" value="UniProtKB-KW"/>
</dbReference>
<dbReference type="GO" id="GO:0016887">
    <property type="term" value="F:ATP hydrolysis activity"/>
    <property type="evidence" value="ECO:0007669"/>
    <property type="project" value="InterPro"/>
</dbReference>
<dbReference type="GO" id="GO:0015415">
    <property type="term" value="F:ATPase-coupled phosphate ion transmembrane transporter activity"/>
    <property type="evidence" value="ECO:0007669"/>
    <property type="project" value="UniProtKB-EC"/>
</dbReference>
<dbReference type="GO" id="GO:0035435">
    <property type="term" value="P:phosphate ion transmembrane transport"/>
    <property type="evidence" value="ECO:0007669"/>
    <property type="project" value="InterPro"/>
</dbReference>
<dbReference type="CDD" id="cd03260">
    <property type="entry name" value="ABC_PstB_phosphate_transporter"/>
    <property type="match status" value="1"/>
</dbReference>
<dbReference type="Gene3D" id="3.40.50.300">
    <property type="entry name" value="P-loop containing nucleotide triphosphate hydrolases"/>
    <property type="match status" value="1"/>
</dbReference>
<dbReference type="InterPro" id="IPR003593">
    <property type="entry name" value="AAA+_ATPase"/>
</dbReference>
<dbReference type="InterPro" id="IPR003439">
    <property type="entry name" value="ABC_transporter-like_ATP-bd"/>
</dbReference>
<dbReference type="InterPro" id="IPR017871">
    <property type="entry name" value="ABC_transporter-like_CS"/>
</dbReference>
<dbReference type="InterPro" id="IPR027417">
    <property type="entry name" value="P-loop_NTPase"/>
</dbReference>
<dbReference type="InterPro" id="IPR005670">
    <property type="entry name" value="PstB-like"/>
</dbReference>
<dbReference type="NCBIfam" id="TIGR00972">
    <property type="entry name" value="3a0107s01c2"/>
    <property type="match status" value="1"/>
</dbReference>
<dbReference type="PANTHER" id="PTHR43423">
    <property type="entry name" value="ABC TRANSPORTER I FAMILY MEMBER 17"/>
    <property type="match status" value="1"/>
</dbReference>
<dbReference type="PANTHER" id="PTHR43423:SF1">
    <property type="entry name" value="ABC TRANSPORTER I FAMILY MEMBER 17"/>
    <property type="match status" value="1"/>
</dbReference>
<dbReference type="Pfam" id="PF00005">
    <property type="entry name" value="ABC_tran"/>
    <property type="match status" value="1"/>
</dbReference>
<dbReference type="SMART" id="SM00382">
    <property type="entry name" value="AAA"/>
    <property type="match status" value="1"/>
</dbReference>
<dbReference type="SUPFAM" id="SSF52540">
    <property type="entry name" value="P-loop containing nucleoside triphosphate hydrolases"/>
    <property type="match status" value="1"/>
</dbReference>
<dbReference type="PROSITE" id="PS00211">
    <property type="entry name" value="ABC_TRANSPORTER_1"/>
    <property type="match status" value="1"/>
</dbReference>
<dbReference type="PROSITE" id="PS50893">
    <property type="entry name" value="ABC_TRANSPORTER_2"/>
    <property type="match status" value="1"/>
</dbReference>
<dbReference type="PROSITE" id="PS51238">
    <property type="entry name" value="PSTB"/>
    <property type="match status" value="1"/>
</dbReference>
<organism>
    <name type="scientific">Desulfitobacterium hafniense (strain Y51)</name>
    <dbReference type="NCBI Taxonomy" id="138119"/>
    <lineage>
        <taxon>Bacteria</taxon>
        <taxon>Bacillati</taxon>
        <taxon>Bacillota</taxon>
        <taxon>Clostridia</taxon>
        <taxon>Eubacteriales</taxon>
        <taxon>Desulfitobacteriaceae</taxon>
        <taxon>Desulfitobacterium</taxon>
    </lineage>
</organism>
<comment type="function">
    <text evidence="1">Part of the ABC transporter complex PstSACB involved in phosphate import. Responsible for energy coupling to the transport system.</text>
</comment>
<comment type="catalytic activity">
    <reaction evidence="1">
        <text>phosphate(out) + ATP + H2O = ADP + 2 phosphate(in) + H(+)</text>
        <dbReference type="Rhea" id="RHEA:24440"/>
        <dbReference type="ChEBI" id="CHEBI:15377"/>
        <dbReference type="ChEBI" id="CHEBI:15378"/>
        <dbReference type="ChEBI" id="CHEBI:30616"/>
        <dbReference type="ChEBI" id="CHEBI:43474"/>
        <dbReference type="ChEBI" id="CHEBI:456216"/>
        <dbReference type="EC" id="7.3.2.1"/>
    </reaction>
</comment>
<comment type="subunit">
    <text evidence="1">The complex is composed of two ATP-binding proteins (PstB), two transmembrane proteins (PstC and PstA) and a solute-binding protein (PstS).</text>
</comment>
<comment type="subcellular location">
    <subcellularLocation>
        <location evidence="1">Cell membrane</location>
        <topology evidence="1">Peripheral membrane protein</topology>
    </subcellularLocation>
</comment>
<comment type="similarity">
    <text evidence="1">Belongs to the ABC transporter superfamily. Phosphate importer (TC 3.A.1.7) family.</text>
</comment>
<reference key="1">
    <citation type="journal article" date="2006" name="J. Bacteriol.">
        <title>Complete genome sequence of the dehalorespiring bacterium Desulfitobacterium hafniense Y51 and comparison with Dehalococcoides ethenogenes 195.</title>
        <authorList>
            <person name="Nonaka H."/>
            <person name="Keresztes G."/>
            <person name="Shinoda Y."/>
            <person name="Ikenaga Y."/>
            <person name="Abe M."/>
            <person name="Naito K."/>
            <person name="Inatomi K."/>
            <person name="Furukawa K."/>
            <person name="Inui M."/>
            <person name="Yukawa H."/>
        </authorList>
    </citation>
    <scope>NUCLEOTIDE SEQUENCE [LARGE SCALE GENOMIC DNA]</scope>
    <source>
        <strain>Y51</strain>
    </source>
</reference>
<feature type="chain" id="PRO_0000272448" description="Phosphate import ATP-binding protein PstB">
    <location>
        <begin position="1"/>
        <end position="259"/>
    </location>
</feature>
<feature type="domain" description="ABC transporter" evidence="1">
    <location>
        <begin position="6"/>
        <end position="254"/>
    </location>
</feature>
<feature type="binding site" evidence="1">
    <location>
        <begin position="45"/>
        <end position="52"/>
    </location>
    <ligand>
        <name>ATP</name>
        <dbReference type="ChEBI" id="CHEBI:30616"/>
    </ligand>
</feature>
<evidence type="ECO:0000255" key="1">
    <source>
        <dbReference type="HAMAP-Rule" id="MF_01702"/>
    </source>
</evidence>
<gene>
    <name evidence="1" type="primary">pstB</name>
    <name type="ordered locus">DSY4115</name>
</gene>
<protein>
    <recommendedName>
        <fullName evidence="1">Phosphate import ATP-binding protein PstB</fullName>
        <ecNumber evidence="1">7.3.2.1</ecNumber>
    </recommendedName>
    <alternativeName>
        <fullName evidence="1">ABC phosphate transporter</fullName>
    </alternativeName>
    <alternativeName>
        <fullName evidence="1">Phosphate-transporting ATPase</fullName>
    </alternativeName>
</protein>
<sequence length="259" mass="29176">MTKDISKNESVVFDVQGLNLWYGEDQALKNIKMQIKKNKVTAIIGPSGCGKSTFIKTLNRMIENIPSVKTTGEIIYQGQNIFAKSVRVEELRTKVGMVFQKPNPFPKSIFANVVYGPRIHGIKDKKLLMDIAETSLRNAALWDEVKDRLHDNAYGLSGGQQQRLCIARCLAVQPDVILMDEPTSALDPIATYKIEELMESLKKHYTIAIVTHSMQQAARISDDTAFFLMGDLIEFDKTTEIFSNPKDKRTEDYITGRIG</sequence>